<evidence type="ECO:0000250" key="1"/>
<evidence type="ECO:0000305" key="2"/>
<accession>Q97W04</accession>
<sequence>MIEIDGSFGEGGGQILRTSLTLSVITGKPFRIFNIRANRPNPGLQRQHLWAVRAMKMISNAETKGDEVGSKELTFIPHEIKGNSIIDIDIGTAGSVTLIMQTMIPAIINKNMRIKIKGGTDVPKSPTIDYIRLVYLEILRKIGIESKVNLIKRGHYPEGGGEVIIENVNGNPSDFSLLELGKLIMIKGISHVSSLPSHIAERQKDSAKAILSKLGVQIEIETDVRQGEVSKGSGIALAAIGEKSIIGADSLGERGKRAEIVGEEAARKLIDNLNTKAAVDVHMSDMLMIFTSLFGGEYIGAELTSHAYTNMEIIRKFLDVKIEISGKRPFRFKAKIF</sequence>
<organism>
    <name type="scientific">Saccharolobus solfataricus (strain ATCC 35092 / DSM 1617 / JCM 11322 / P2)</name>
    <name type="common">Sulfolobus solfataricus</name>
    <dbReference type="NCBI Taxonomy" id="273057"/>
    <lineage>
        <taxon>Archaea</taxon>
        <taxon>Thermoproteota</taxon>
        <taxon>Thermoprotei</taxon>
        <taxon>Sulfolobales</taxon>
        <taxon>Sulfolobaceae</taxon>
        <taxon>Saccharolobus</taxon>
    </lineage>
</organism>
<proteinExistence type="inferred from homology"/>
<comment type="function">
    <text evidence="1">Catalyzes the conversion of 3'-phosphate to a 2',3'-cyclic phosphodiester at the end of RNA. The mechanism of action of the enzyme occurs in 3 steps: (A) adenylation of the enzyme by ATP; (B) transfer of adenylate to an RNA-N3'P to produce RNA-N3'PP5'A; (C) and attack of the adjacent 2'-hydroxyl on the 3'-phosphorus in the diester linkage to produce the cyclic end product. The biological role of this enzyme is unknown but it is likely to function in some aspects of cellular RNA processing (By similarity).</text>
</comment>
<comment type="catalytic activity">
    <reaction>
        <text>a 3'-end 3'-phospho-ribonucleotide-RNA + ATP = a 3'-end 2',3'-cyclophospho-ribonucleotide-RNA + AMP + diphosphate</text>
        <dbReference type="Rhea" id="RHEA:23976"/>
        <dbReference type="Rhea" id="RHEA-COMP:10463"/>
        <dbReference type="Rhea" id="RHEA-COMP:10464"/>
        <dbReference type="ChEBI" id="CHEBI:30616"/>
        <dbReference type="ChEBI" id="CHEBI:33019"/>
        <dbReference type="ChEBI" id="CHEBI:83062"/>
        <dbReference type="ChEBI" id="CHEBI:83064"/>
        <dbReference type="ChEBI" id="CHEBI:456215"/>
        <dbReference type="EC" id="6.5.1.4"/>
    </reaction>
</comment>
<comment type="subcellular location">
    <subcellularLocation>
        <location evidence="2">Cytoplasm</location>
    </subcellularLocation>
</comment>
<comment type="similarity">
    <text evidence="2">Belongs to the RNA 3'-terminal cyclase family. Type 1 subfamily.</text>
</comment>
<comment type="sequence caution" evidence="2">
    <conflict type="erroneous initiation">
        <sequence resource="EMBL-CDS" id="AAK42586"/>
    </conflict>
</comment>
<name>RTCA_SACS2</name>
<reference key="1">
    <citation type="journal article" date="2001" name="Proc. Natl. Acad. Sci. U.S.A.">
        <title>The complete genome of the crenarchaeon Sulfolobus solfataricus P2.</title>
        <authorList>
            <person name="She Q."/>
            <person name="Singh R.K."/>
            <person name="Confalonieri F."/>
            <person name="Zivanovic Y."/>
            <person name="Allard G."/>
            <person name="Awayez M.J."/>
            <person name="Chan-Weiher C.C.-Y."/>
            <person name="Clausen I.G."/>
            <person name="Curtis B.A."/>
            <person name="De Moors A."/>
            <person name="Erauso G."/>
            <person name="Fletcher C."/>
            <person name="Gordon P.M.K."/>
            <person name="Heikamp-de Jong I."/>
            <person name="Jeffries A.C."/>
            <person name="Kozera C.J."/>
            <person name="Medina N."/>
            <person name="Peng X."/>
            <person name="Thi-Ngoc H.P."/>
            <person name="Redder P."/>
            <person name="Schenk M.E."/>
            <person name="Theriault C."/>
            <person name="Tolstrup N."/>
            <person name="Charlebois R.L."/>
            <person name="Doolittle W.F."/>
            <person name="Duguet M."/>
            <person name="Gaasterland T."/>
            <person name="Garrett R.A."/>
            <person name="Ragan M.A."/>
            <person name="Sensen C.W."/>
            <person name="Van der Oost J."/>
        </authorList>
    </citation>
    <scope>NUCLEOTIDE SEQUENCE [LARGE SCALE GENOMIC DNA]</scope>
    <source>
        <strain>ATCC 35092 / DSM 1617 / JCM 11322 / P2</strain>
    </source>
</reference>
<keyword id="KW-0067">ATP-binding</keyword>
<keyword id="KW-0963">Cytoplasm</keyword>
<keyword id="KW-0436">Ligase</keyword>
<keyword id="KW-0547">Nucleotide-binding</keyword>
<keyword id="KW-1185">Reference proteome</keyword>
<dbReference type="EC" id="6.5.1.4"/>
<dbReference type="EMBL" id="AE006641">
    <property type="protein sequence ID" value="AAK42586.1"/>
    <property type="status" value="ALT_INIT"/>
    <property type="molecule type" value="Genomic_DNA"/>
</dbReference>
<dbReference type="PIR" id="C90416">
    <property type="entry name" value="C90416"/>
</dbReference>
<dbReference type="RefSeq" id="WP_009993131.1">
    <property type="nucleotide sequence ID" value="NC_002754.1"/>
</dbReference>
<dbReference type="SMR" id="Q97W04"/>
<dbReference type="FunCoup" id="Q97W04">
    <property type="interactions" value="232"/>
</dbReference>
<dbReference type="STRING" id="273057.SSO2446"/>
<dbReference type="PaxDb" id="273057-SSO2446"/>
<dbReference type="EnsemblBacteria" id="AAK42586">
    <property type="protein sequence ID" value="AAK42586"/>
    <property type="gene ID" value="SSO2446"/>
</dbReference>
<dbReference type="GeneID" id="44128164"/>
<dbReference type="KEGG" id="sso:SSO2446"/>
<dbReference type="PATRIC" id="fig|273057.12.peg.2524"/>
<dbReference type="eggNOG" id="arCOG04125">
    <property type="taxonomic scope" value="Archaea"/>
</dbReference>
<dbReference type="HOGENOM" id="CLU_027882_0_0_2"/>
<dbReference type="InParanoid" id="Q97W04"/>
<dbReference type="PhylomeDB" id="Q97W04"/>
<dbReference type="Proteomes" id="UP000001974">
    <property type="component" value="Chromosome"/>
</dbReference>
<dbReference type="GO" id="GO:0005737">
    <property type="term" value="C:cytoplasm"/>
    <property type="evidence" value="ECO:0007669"/>
    <property type="project" value="UniProtKB-SubCell"/>
</dbReference>
<dbReference type="GO" id="GO:0005524">
    <property type="term" value="F:ATP binding"/>
    <property type="evidence" value="ECO:0007669"/>
    <property type="project" value="UniProtKB-KW"/>
</dbReference>
<dbReference type="GO" id="GO:0003963">
    <property type="term" value="F:RNA-3'-phosphate cyclase activity"/>
    <property type="evidence" value="ECO:0000318"/>
    <property type="project" value="GO_Central"/>
</dbReference>
<dbReference type="GO" id="GO:0006396">
    <property type="term" value="P:RNA processing"/>
    <property type="evidence" value="ECO:0007669"/>
    <property type="project" value="InterPro"/>
</dbReference>
<dbReference type="CDD" id="cd00874">
    <property type="entry name" value="RNA_Cyclase_Class_II"/>
    <property type="match status" value="1"/>
</dbReference>
<dbReference type="FunFam" id="3.30.360.20:FF:000002">
    <property type="entry name" value="RNA terminal phosphate cyclase-like 1"/>
    <property type="match status" value="1"/>
</dbReference>
<dbReference type="Gene3D" id="3.65.10.20">
    <property type="entry name" value="RNA 3'-terminal phosphate cyclase domain"/>
    <property type="match status" value="1"/>
</dbReference>
<dbReference type="Gene3D" id="3.30.360.20">
    <property type="entry name" value="RNA 3'-terminal phosphate cyclase, insert domain"/>
    <property type="match status" value="1"/>
</dbReference>
<dbReference type="HAMAP" id="MF_00200">
    <property type="entry name" value="RTC"/>
    <property type="match status" value="1"/>
</dbReference>
<dbReference type="InterPro" id="IPR013791">
    <property type="entry name" value="RNA3'-term_phos_cycl_insert"/>
</dbReference>
<dbReference type="InterPro" id="IPR023797">
    <property type="entry name" value="RNA3'_phos_cyclase_dom"/>
</dbReference>
<dbReference type="InterPro" id="IPR037136">
    <property type="entry name" value="RNA3'_phos_cyclase_dom_sf"/>
</dbReference>
<dbReference type="InterPro" id="IPR000228">
    <property type="entry name" value="RNA3'_term_phos_cyc"/>
</dbReference>
<dbReference type="InterPro" id="IPR017770">
    <property type="entry name" value="RNA3'_term_phos_cyc_type_1"/>
</dbReference>
<dbReference type="InterPro" id="IPR020719">
    <property type="entry name" value="RNA3'_term_phos_cycl-like_CS"/>
</dbReference>
<dbReference type="InterPro" id="IPR013792">
    <property type="entry name" value="RNA3'P_cycl/enolpyr_Trfase_a/b"/>
</dbReference>
<dbReference type="InterPro" id="IPR036553">
    <property type="entry name" value="RPTC_insert"/>
</dbReference>
<dbReference type="NCBIfam" id="TIGR03399">
    <property type="entry name" value="RNA_3prim_cycl"/>
    <property type="match status" value="1"/>
</dbReference>
<dbReference type="PANTHER" id="PTHR11096">
    <property type="entry name" value="RNA 3' TERMINAL PHOSPHATE CYCLASE"/>
    <property type="match status" value="1"/>
</dbReference>
<dbReference type="PANTHER" id="PTHR11096:SF0">
    <property type="entry name" value="RNA 3'-TERMINAL PHOSPHATE CYCLASE"/>
    <property type="match status" value="1"/>
</dbReference>
<dbReference type="Pfam" id="PF01137">
    <property type="entry name" value="RTC"/>
    <property type="match status" value="1"/>
</dbReference>
<dbReference type="Pfam" id="PF05189">
    <property type="entry name" value="RTC_insert"/>
    <property type="match status" value="1"/>
</dbReference>
<dbReference type="PIRSF" id="PIRSF005378">
    <property type="entry name" value="RNA3'_term_phos_cycl_euk"/>
    <property type="match status" value="1"/>
</dbReference>
<dbReference type="SUPFAM" id="SSF55205">
    <property type="entry name" value="EPT/RTPC-like"/>
    <property type="match status" value="1"/>
</dbReference>
<dbReference type="PROSITE" id="PS01287">
    <property type="entry name" value="RTC"/>
    <property type="match status" value="1"/>
</dbReference>
<gene>
    <name type="primary">rtcA</name>
    <name type="ordered locus">SSO2446</name>
</gene>
<protein>
    <recommendedName>
        <fullName>RNA 3'-terminal phosphate cyclase</fullName>
        <shortName>RNA cyclase</shortName>
        <shortName>RNA-3'-phosphate cyclase</shortName>
        <ecNumber>6.5.1.4</ecNumber>
    </recommendedName>
</protein>
<feature type="chain" id="PRO_0000156436" description="RNA 3'-terminal phosphate cyclase">
    <location>
        <begin position="1"/>
        <end position="337"/>
    </location>
</feature>
<feature type="active site" description="Tele-AMP-histidine intermediate" evidence="1">
    <location>
        <position position="306"/>
    </location>
</feature>
<feature type="binding site" evidence="1">
    <location>
        <position position="101"/>
    </location>
    <ligand>
        <name>ATP</name>
        <dbReference type="ChEBI" id="CHEBI:30616"/>
    </ligand>
</feature>
<feature type="binding site" evidence="1">
    <location>
        <begin position="282"/>
        <end position="285"/>
    </location>
    <ligand>
        <name>ATP</name>
        <dbReference type="ChEBI" id="CHEBI:30616"/>
    </ligand>
</feature>